<protein>
    <recommendedName>
        <fullName>Gag polyprotein</fullName>
    </recommendedName>
    <alternativeName>
        <fullName>Core polyprotein</fullName>
    </alternativeName>
    <component>
        <recommendedName>
            <fullName>Matrix protein p15</fullName>
            <shortName>MA</shortName>
        </recommendedName>
    </component>
    <component>
        <recommendedName>
            <fullName>RNA-binding phosphoprotein p12</fullName>
        </recommendedName>
        <alternativeName>
            <fullName>pp12</fullName>
        </alternativeName>
    </component>
    <component>
        <recommendedName>
            <fullName>Capsid protein p30</fullName>
            <shortName>CA</shortName>
        </recommendedName>
    </component>
    <component>
        <recommendedName>
            <fullName>Nucleocapsid protein p10-Gag</fullName>
            <shortName>NC-gag</shortName>
        </recommendedName>
    </component>
</protein>
<dbReference type="EMBL" id="X57540">
    <property type="protein sequence ID" value="CAA40759.1"/>
    <property type="molecule type" value="Genomic_DNA"/>
</dbReference>
<dbReference type="SMR" id="P27460"/>
<dbReference type="GO" id="GO:0020002">
    <property type="term" value="C:host cell plasma membrane"/>
    <property type="evidence" value="ECO:0007669"/>
    <property type="project" value="UniProtKB-SubCell"/>
</dbReference>
<dbReference type="GO" id="GO:0072494">
    <property type="term" value="C:host multivesicular body"/>
    <property type="evidence" value="ECO:0007669"/>
    <property type="project" value="UniProtKB-SubCell"/>
</dbReference>
<dbReference type="GO" id="GO:0016020">
    <property type="term" value="C:membrane"/>
    <property type="evidence" value="ECO:0007669"/>
    <property type="project" value="UniProtKB-KW"/>
</dbReference>
<dbReference type="GO" id="GO:0019013">
    <property type="term" value="C:viral nucleocapsid"/>
    <property type="evidence" value="ECO:0007669"/>
    <property type="project" value="UniProtKB-KW"/>
</dbReference>
<dbReference type="GO" id="GO:0003723">
    <property type="term" value="F:RNA binding"/>
    <property type="evidence" value="ECO:0007669"/>
    <property type="project" value="UniProtKB-KW"/>
</dbReference>
<dbReference type="GO" id="GO:0039660">
    <property type="term" value="F:structural constituent of virion"/>
    <property type="evidence" value="ECO:0007669"/>
    <property type="project" value="UniProtKB-KW"/>
</dbReference>
<dbReference type="GO" id="GO:0008270">
    <property type="term" value="F:zinc ion binding"/>
    <property type="evidence" value="ECO:0007669"/>
    <property type="project" value="UniProtKB-KW"/>
</dbReference>
<dbReference type="GO" id="GO:0039702">
    <property type="term" value="P:viral budding via host ESCRT complex"/>
    <property type="evidence" value="ECO:0007669"/>
    <property type="project" value="UniProtKB-KW"/>
</dbReference>
<dbReference type="FunFam" id="1.10.150.180:FF:000001">
    <property type="entry name" value="Gag polyprotein"/>
    <property type="match status" value="1"/>
</dbReference>
<dbReference type="Gene3D" id="1.10.150.180">
    <property type="entry name" value="Gamma-retroviral matrix domain"/>
    <property type="match status" value="1"/>
</dbReference>
<dbReference type="Gene3D" id="1.10.375.10">
    <property type="entry name" value="Human Immunodeficiency Virus Type 1 Capsid Protein"/>
    <property type="match status" value="1"/>
</dbReference>
<dbReference type="Gene3D" id="4.10.60.10">
    <property type="entry name" value="Zinc finger, CCHC-type"/>
    <property type="match status" value="1"/>
</dbReference>
<dbReference type="InterPro" id="IPR000840">
    <property type="entry name" value="G_retro_matrix"/>
</dbReference>
<dbReference type="InterPro" id="IPR036946">
    <property type="entry name" value="G_retro_matrix_sf"/>
</dbReference>
<dbReference type="InterPro" id="IPR002079">
    <property type="entry name" value="Gag_p12"/>
</dbReference>
<dbReference type="InterPro" id="IPR003036">
    <property type="entry name" value="Gag_P30"/>
</dbReference>
<dbReference type="InterPro" id="IPR008919">
    <property type="entry name" value="Retrov_capsid_N"/>
</dbReference>
<dbReference type="InterPro" id="IPR050462">
    <property type="entry name" value="Retroviral_Gag-Pol_poly"/>
</dbReference>
<dbReference type="InterPro" id="IPR010999">
    <property type="entry name" value="Retrovr_matrix"/>
</dbReference>
<dbReference type="InterPro" id="IPR001878">
    <property type="entry name" value="Znf_CCHC"/>
</dbReference>
<dbReference type="InterPro" id="IPR036875">
    <property type="entry name" value="Znf_CCHC_sf"/>
</dbReference>
<dbReference type="PANTHER" id="PTHR33166">
    <property type="entry name" value="GAG_P30 DOMAIN-CONTAINING PROTEIN"/>
    <property type="match status" value="1"/>
</dbReference>
<dbReference type="Pfam" id="PF01140">
    <property type="entry name" value="Gag_MA"/>
    <property type="match status" value="1"/>
</dbReference>
<dbReference type="Pfam" id="PF01141">
    <property type="entry name" value="Gag_p12"/>
    <property type="match status" value="1"/>
</dbReference>
<dbReference type="Pfam" id="PF02093">
    <property type="entry name" value="Gag_p30"/>
    <property type="match status" value="1"/>
</dbReference>
<dbReference type="Pfam" id="PF00098">
    <property type="entry name" value="zf-CCHC"/>
    <property type="match status" value="1"/>
</dbReference>
<dbReference type="SMART" id="SM00343">
    <property type="entry name" value="ZnF_C2HC"/>
    <property type="match status" value="1"/>
</dbReference>
<dbReference type="SUPFAM" id="SSF47836">
    <property type="entry name" value="Retroviral matrix proteins"/>
    <property type="match status" value="1"/>
</dbReference>
<dbReference type="SUPFAM" id="SSF47943">
    <property type="entry name" value="Retrovirus capsid protein, N-terminal core domain"/>
    <property type="match status" value="1"/>
</dbReference>
<dbReference type="SUPFAM" id="SSF57756">
    <property type="entry name" value="Retrovirus zinc finger-like domains"/>
    <property type="match status" value="1"/>
</dbReference>
<dbReference type="PROSITE" id="PS50158">
    <property type="entry name" value="ZF_CCHC"/>
    <property type="match status" value="1"/>
</dbReference>
<organism>
    <name type="scientific">Cas-Br-E murine leukemia virus</name>
    <dbReference type="NCBI Taxonomy" id="11792"/>
    <lineage>
        <taxon>Viruses</taxon>
        <taxon>Riboviria</taxon>
        <taxon>Pararnavirae</taxon>
        <taxon>Artverviricota</taxon>
        <taxon>Revtraviricetes</taxon>
        <taxon>Ortervirales</taxon>
        <taxon>Retroviridae</taxon>
        <taxon>Orthoretrovirinae</taxon>
        <taxon>Gammaretrovirus</taxon>
        <taxon>Murine leukemia virus</taxon>
    </lineage>
</organism>
<proteinExistence type="inferred from homology"/>
<gene>
    <name type="primary">gag</name>
</gene>
<name>GAG_MLVCB</name>
<reference key="1">
    <citation type="journal article" date="1991" name="Nucleic Acids Res.">
        <title>Complete nucleotide sequence of the neurotropic murine retrovirus CAS-BR-E.</title>
        <authorList>
            <person name="Perryman S.M."/>
            <person name="McAtee F.J."/>
            <person name="Portis J.L."/>
        </authorList>
    </citation>
    <scope>NUCLEOTIDE SEQUENCE [GENOMIC DNA]</scope>
</reference>
<sequence length="536" mass="60740">MGQTVTTPLSLTLDHWKDVERTAHNQSVDVKKRRWVTFCSVEWPTFNVGWPQDGTFNRDIITQVKIKVFSPGPHGHPDQVPYIVTWEALAFDPPPWVKPFVHPKPPLPPSAPSLLPEPPLSTSPRSSLYPALTPSLGAKPKPQVLPDSGGPLIDLLTEDPPPYRDPGPPPSDRDRDDGEAAPAGEAPDPSPMASRLRGRRELPVADSTTSQAFPLRSGGNGQLQYWPFSSSDLYNWKNNNPSFSEDPGKLTALIESVLLTHQPTWDDCQQLLGTLLTGEEKQRVLLEARKAVRGEDGRPTQLPNEINDAFPLERPDWDYNTQRGRNHLVLYRQLLLAGLQNAGRSPTNLAKVKGITQGPNESPSAFLERLKEAYRRYTPYDPEDPGQETNVSMSFIWQSAPDIGRKLERLEDLKSKTLGDLVREAEKIFNKRETPEEREERIKRETEEKEERRRAEDEQKEKERDRRRHREMSKLLATVVSGQKQDRQGGERRRPQLDKDQCAYCKEKGHWAKDCPKKPRGPRGPRPQTSLLALDD</sequence>
<organismHost>
    <name type="scientific">Mus musculus</name>
    <name type="common">Mouse</name>
    <dbReference type="NCBI Taxonomy" id="10090"/>
</organismHost>
<comment type="function">
    <molecule>Gag polyprotein</molecule>
    <text evidence="2">Plays a role in budding and is processed by the viral protease during virion maturation outside the cell. During budding, it recruits, in a PPXY-dependent or independent manner, Nedd4-like ubiquitin ligases that conjugate ubiquitin molecules to Gag, or to Gag binding host factors. Interaction with HECT ubiquitin ligases probably links the viral protein to the host ESCRT pathway and facilitates release.</text>
</comment>
<comment type="function">
    <molecule>Matrix protein p15</molecule>
    <text evidence="2">Targets Gag and gag-pol polyproteins to the plasma membrane via a multipartite membrane binding signal, that includes its myristoylated N-terminus. Also mediates nuclear localization of the pre-integration complex.</text>
</comment>
<comment type="function">
    <molecule>RNA-binding phosphoprotein p12</molecule>
    <text evidence="2">Constituent of the pre-integration complex (PIC) which tethers the latter to mitotic chromosomes.</text>
</comment>
<comment type="function">
    <molecule>Capsid protein p30</molecule>
    <text evidence="3">Forms the spherical core of the virion that encapsulates the genomic RNA-nucleocapsid complex.</text>
</comment>
<comment type="function">
    <molecule>Nucleocapsid protein p10-Gag</molecule>
    <text evidence="2">Involved in the packaging and encapsidation of two copies of the genome. Binds with high affinity to conserved UCUG elements within the packaging signal, located near the 5'-end of the genome. This binding is dependent on genome dimerization.</text>
</comment>
<comment type="subunit">
    <molecule>Capsid protein p30</molecule>
    <text evidence="2 3">Homohexamer; further associates as homomultimer (By similarity). The virus core is composed of a lattice formed from hexagonal rings, each containing six capsid monomers. Interacts with mouse UBE2I and mouse PIAS4.</text>
</comment>
<comment type="subunit">
    <molecule>Gag polyprotein</molecule>
    <text evidence="2">Interacts (via PPXY motif) with host NEDD4. Interacts (via PSAP motif) with host TSG101. Interacts (via LYPX(n)L motif) with host PDCD6IP.</text>
</comment>
<comment type="subcellular location">
    <molecule>Gag polyprotein</molecule>
    <subcellularLocation>
        <location evidence="2">Virion</location>
    </subcellularLocation>
    <subcellularLocation>
        <location evidence="2">Host cell membrane</location>
        <topology evidence="2">Lipid-anchor</topology>
    </subcellularLocation>
    <subcellularLocation>
        <location evidence="4">Host endosome</location>
        <location evidence="4">Host multivesicular body</location>
    </subcellularLocation>
</comment>
<comment type="subcellular location">
    <molecule>Matrix protein p15</molecule>
    <subcellularLocation>
        <location evidence="2">Virion</location>
    </subcellularLocation>
</comment>
<comment type="subcellular location">
    <molecule>Capsid protein p30</molecule>
    <subcellularLocation>
        <location evidence="2">Virion</location>
    </subcellularLocation>
</comment>
<comment type="subcellular location">
    <molecule>Nucleocapsid protein p10-Gag</molecule>
    <subcellularLocation>
        <location evidence="2">Virion</location>
    </subcellularLocation>
</comment>
<comment type="subcellular location">
    <molecule>RNA-binding phosphoprotein p12</molecule>
    <subcellularLocation>
        <location evidence="2">Host cytoplasm</location>
    </subcellularLocation>
    <text evidence="2">Localizes to the host cytoplasm early in infection and binds to the mitotic chromosomes later on.</text>
</comment>
<comment type="alternative products">
    <event type="alternative initiation"/>
    <isoform>
        <id>P27460-1</id>
        <name>Gag polyprotein</name>
        <sequence type="displayed"/>
    </isoform>
    <isoform>
        <id>P0DOH4-1</id>
        <name>Glyco-Gag protein</name>
        <sequence type="external"/>
    </isoform>
</comment>
<comment type="domain">
    <molecule>Gag polyprotein</molecule>
    <text evidence="2">Late-budding domains (L domains) are short sequence motifs essential for viral particle budding. They recruit proteins of the host ESCRT machinery (Endosomal Sorting Complex Required for Transport) or ESCRT-associated proteins. RNA-binding phosphoprotein p12 contains one L domain: a PPXY motif which interacts with the WW domain 3 of NEDD4 E3 ubiquitin ligase. PPXY motif is essential for virus egress. Matrix protein p15 contains one L domain: a PTAP/PSAP motif, which interacts with the UEV domain of TSG101. The junction between the matrix protein p15 and RNA-binding phosphoprotein p12 also contains one L domain: a LYPX(n)L motif which interacts with PDCD6IP. Both PSAP and LYPX(n)L domains might play little to no role in budding and possibly drive residual virus release.</text>
</comment>
<comment type="PTM">
    <molecule>Gag polyprotein</molecule>
    <text evidence="2">Ubiquitinated by ITCH. Gag can recruit the ubiquitin ligase Itch in an L domain-independent manner to facilitate virus release via a mechanism that involves Gag ubiquitination.</text>
</comment>
<comment type="PTM">
    <molecule>Gag polyprotein</molecule>
    <text evidence="2">Specific enzymatic cleavages by the viral protease yield mature proteins. The protease is released by autocatalytic cleavage. The polyprotein is cleaved during and after budding, this process is termed maturation.</text>
</comment>
<comment type="PTM">
    <molecule>Capsid protein p30</molecule>
    <text evidence="2">Sumoylated; required for virus replication.</text>
</comment>
<comment type="PTM">
    <text evidence="2">RNA-binding phosphoprotein p12 is phosphorylated on serine residues.</text>
</comment>
<keyword id="KW-0024">Alternative initiation</keyword>
<keyword id="KW-0167">Capsid protein</keyword>
<keyword id="KW-0175">Coiled coil</keyword>
<keyword id="KW-1032">Host cell membrane</keyword>
<keyword id="KW-1035">Host cytoplasm</keyword>
<keyword id="KW-1039">Host endosome</keyword>
<keyword id="KW-1043">Host membrane</keyword>
<keyword id="KW-0945">Host-virus interaction</keyword>
<keyword id="KW-0449">Lipoprotein</keyword>
<keyword id="KW-0472">Membrane</keyword>
<keyword id="KW-0479">Metal-binding</keyword>
<keyword id="KW-0519">Myristate</keyword>
<keyword id="KW-0597">Phosphoprotein</keyword>
<keyword id="KW-0694">RNA-binding</keyword>
<keyword id="KW-0832">Ubl conjugation</keyword>
<keyword id="KW-1198">Viral budding</keyword>
<keyword id="KW-1187">Viral budding via the host ESCRT complexes</keyword>
<keyword id="KW-0468">Viral matrix protein</keyword>
<keyword id="KW-0543">Viral nucleoprotein</keyword>
<keyword id="KW-1188">Viral release from host cell</keyword>
<keyword id="KW-0946">Virion</keyword>
<keyword id="KW-0862">Zinc</keyword>
<keyword id="KW-0863">Zinc-finger</keyword>
<evidence type="ECO:0000250" key="1"/>
<evidence type="ECO:0000250" key="2">
    <source>
        <dbReference type="UniProtKB" id="P03332"/>
    </source>
</evidence>
<evidence type="ECO:0000250" key="3">
    <source>
        <dbReference type="UniProtKB" id="P03336"/>
    </source>
</evidence>
<evidence type="ECO:0000250" key="4">
    <source>
        <dbReference type="UniProtKB" id="P26807"/>
    </source>
</evidence>
<evidence type="ECO:0000255" key="5"/>
<evidence type="ECO:0000255" key="6">
    <source>
        <dbReference type="PROSITE-ProRule" id="PRU00047"/>
    </source>
</evidence>
<evidence type="ECO:0000256" key="7">
    <source>
        <dbReference type="SAM" id="MobiDB-lite"/>
    </source>
</evidence>
<feature type="initiator methionine" description="Removed; by host" evidence="5">
    <location>
        <position position="1"/>
    </location>
</feature>
<feature type="chain" id="PRO_0000390808" description="Gag polyprotein" evidence="1">
    <location>
        <begin position="2"/>
        <end position="536"/>
    </location>
</feature>
<feature type="chain" id="PRO_0000040884" description="Matrix protein p15">
    <location>
        <begin position="2"/>
        <end position="129"/>
    </location>
</feature>
<feature type="chain" id="PRO_0000040885" description="RNA-binding phosphoprotein p12">
    <location>
        <begin position="130"/>
        <end position="213"/>
    </location>
</feature>
<feature type="chain" id="PRO_0000040886" description="Capsid protein p30">
    <location>
        <begin position="214"/>
        <end position="476"/>
    </location>
</feature>
<feature type="chain" id="PRO_0000040887" description="Nucleocapsid protein p10-Gag" evidence="5">
    <location>
        <begin position="477"/>
        <end position="536"/>
    </location>
</feature>
<feature type="zinc finger region" description="CCHC-type" evidence="6">
    <location>
        <begin position="500"/>
        <end position="517"/>
    </location>
</feature>
<feature type="region of interest" description="Disordered" evidence="7">
    <location>
        <begin position="112"/>
        <end position="196"/>
    </location>
</feature>
<feature type="region of interest" description="Disordered" evidence="7">
    <location>
        <begin position="202"/>
        <end position="221"/>
    </location>
</feature>
<feature type="region of interest" description="Interaction with host PIAS4" evidence="2">
    <location>
        <begin position="343"/>
        <end position="391"/>
    </location>
</feature>
<feature type="region of interest" description="Interaction with host UBE2I" evidence="2">
    <location>
        <begin position="428"/>
        <end position="433"/>
    </location>
</feature>
<feature type="region of interest" description="Disordered" evidence="7">
    <location>
        <begin position="432"/>
        <end position="536"/>
    </location>
</feature>
<feature type="coiled-coil region" evidence="5">
    <location>
        <begin position="436"/>
        <end position="476"/>
    </location>
</feature>
<feature type="short sequence motif" description="PTAP/PSAP motif" evidence="2">
    <location>
        <begin position="109"/>
        <end position="112"/>
    </location>
</feature>
<feature type="short sequence motif" description="LYPX(n)L motif" evidence="2">
    <location>
        <begin position="128"/>
        <end position="132"/>
    </location>
</feature>
<feature type="short sequence motif" description="PPXY motif" evidence="2">
    <location>
        <begin position="160"/>
        <end position="163"/>
    </location>
</feature>
<feature type="compositionally biased region" description="Pro residues" evidence="7">
    <location>
        <begin position="112"/>
        <end position="121"/>
    </location>
</feature>
<feature type="compositionally biased region" description="Pro residues" evidence="7">
    <location>
        <begin position="159"/>
        <end position="170"/>
    </location>
</feature>
<feature type="compositionally biased region" description="Basic and acidic residues" evidence="7">
    <location>
        <begin position="432"/>
        <end position="464"/>
    </location>
</feature>
<feature type="compositionally biased region" description="Basic and acidic residues" evidence="7">
    <location>
        <begin position="484"/>
        <end position="517"/>
    </location>
</feature>
<feature type="site" description="Cleavage; by viral protease" evidence="2">
    <location>
        <begin position="129"/>
        <end position="130"/>
    </location>
</feature>
<feature type="site" description="Cleavage; by viral protease" evidence="2">
    <location>
        <begin position="213"/>
        <end position="214"/>
    </location>
</feature>
<feature type="site" description="Cleavage; by viral protease" evidence="2">
    <location>
        <begin position="476"/>
        <end position="477"/>
    </location>
</feature>
<feature type="modified residue" description="Phosphoserine; by host" evidence="2">
    <location>
        <position position="190"/>
    </location>
</feature>
<feature type="lipid moiety-binding region" description="N-myristoyl glycine; by host" evidence="5">
    <location>
        <position position="2"/>
    </location>
</feature>
<accession>P27460</accession>